<accession>Q92N38</accession>
<feature type="chain" id="PRO_0000175008" description="Thymidine kinase">
    <location>
        <begin position="1"/>
        <end position="195"/>
    </location>
</feature>
<feature type="active site" description="Proton acceptor" evidence="1">
    <location>
        <position position="90"/>
    </location>
</feature>
<feature type="binding site" evidence="1">
    <location>
        <begin position="9"/>
        <end position="16"/>
    </location>
    <ligand>
        <name>ATP</name>
        <dbReference type="ChEBI" id="CHEBI:30616"/>
    </ligand>
</feature>
<feature type="binding site" evidence="1">
    <location>
        <begin position="89"/>
        <end position="92"/>
    </location>
    <ligand>
        <name>ATP</name>
        <dbReference type="ChEBI" id="CHEBI:30616"/>
    </ligand>
</feature>
<feature type="binding site" evidence="1">
    <location>
        <position position="147"/>
    </location>
    <ligand>
        <name>Zn(2+)</name>
        <dbReference type="ChEBI" id="CHEBI:29105"/>
    </ligand>
</feature>
<feature type="binding site" evidence="1">
    <location>
        <position position="149"/>
    </location>
    <ligand>
        <name>Zn(2+)</name>
        <dbReference type="ChEBI" id="CHEBI:29105"/>
    </ligand>
</feature>
<feature type="binding site" evidence="1">
    <location>
        <position position="184"/>
    </location>
    <ligand>
        <name>Zn(2+)</name>
        <dbReference type="ChEBI" id="CHEBI:29105"/>
    </ligand>
</feature>
<feature type="binding site" evidence="1">
    <location>
        <position position="187"/>
    </location>
    <ligand>
        <name>Zn(2+)</name>
        <dbReference type="ChEBI" id="CHEBI:29105"/>
    </ligand>
</feature>
<reference key="1">
    <citation type="journal article" date="2001" name="Proc. Natl. Acad. Sci. U.S.A.">
        <title>Analysis of the chromosome sequence of the legume symbiont Sinorhizobium meliloti strain 1021.</title>
        <authorList>
            <person name="Capela D."/>
            <person name="Barloy-Hubler F."/>
            <person name="Gouzy J."/>
            <person name="Bothe G."/>
            <person name="Ampe F."/>
            <person name="Batut J."/>
            <person name="Boistard P."/>
            <person name="Becker A."/>
            <person name="Boutry M."/>
            <person name="Cadieu E."/>
            <person name="Dreano S."/>
            <person name="Gloux S."/>
            <person name="Godrie T."/>
            <person name="Goffeau A."/>
            <person name="Kahn D."/>
            <person name="Kiss E."/>
            <person name="Lelaure V."/>
            <person name="Masuy D."/>
            <person name="Pohl T."/>
            <person name="Portetelle D."/>
            <person name="Puehler A."/>
            <person name="Purnelle B."/>
            <person name="Ramsperger U."/>
            <person name="Renard C."/>
            <person name="Thebault P."/>
            <person name="Vandenbol M."/>
            <person name="Weidner S."/>
            <person name="Galibert F."/>
        </authorList>
    </citation>
    <scope>NUCLEOTIDE SEQUENCE [LARGE SCALE GENOMIC DNA]</scope>
    <source>
        <strain>1021</strain>
    </source>
</reference>
<reference key="2">
    <citation type="journal article" date="2001" name="Science">
        <title>The composite genome of the legume symbiont Sinorhizobium meliloti.</title>
        <authorList>
            <person name="Galibert F."/>
            <person name="Finan T.M."/>
            <person name="Long S.R."/>
            <person name="Puehler A."/>
            <person name="Abola P."/>
            <person name="Ampe F."/>
            <person name="Barloy-Hubler F."/>
            <person name="Barnett M.J."/>
            <person name="Becker A."/>
            <person name="Boistard P."/>
            <person name="Bothe G."/>
            <person name="Boutry M."/>
            <person name="Bowser L."/>
            <person name="Buhrmester J."/>
            <person name="Cadieu E."/>
            <person name="Capela D."/>
            <person name="Chain P."/>
            <person name="Cowie A."/>
            <person name="Davis R.W."/>
            <person name="Dreano S."/>
            <person name="Federspiel N.A."/>
            <person name="Fisher R.F."/>
            <person name="Gloux S."/>
            <person name="Godrie T."/>
            <person name="Goffeau A."/>
            <person name="Golding B."/>
            <person name="Gouzy J."/>
            <person name="Gurjal M."/>
            <person name="Hernandez-Lucas I."/>
            <person name="Hong A."/>
            <person name="Huizar L."/>
            <person name="Hyman R.W."/>
            <person name="Jones T."/>
            <person name="Kahn D."/>
            <person name="Kahn M.L."/>
            <person name="Kalman S."/>
            <person name="Keating D.H."/>
            <person name="Kiss E."/>
            <person name="Komp C."/>
            <person name="Lelaure V."/>
            <person name="Masuy D."/>
            <person name="Palm C."/>
            <person name="Peck M.C."/>
            <person name="Pohl T.M."/>
            <person name="Portetelle D."/>
            <person name="Purnelle B."/>
            <person name="Ramsperger U."/>
            <person name="Surzycki R."/>
            <person name="Thebault P."/>
            <person name="Vandenbol M."/>
            <person name="Vorhoelter F.J."/>
            <person name="Weidner S."/>
            <person name="Wells D.H."/>
            <person name="Wong K."/>
            <person name="Yeh K.-C."/>
            <person name="Batut J."/>
        </authorList>
    </citation>
    <scope>NUCLEOTIDE SEQUENCE [LARGE SCALE GENOMIC DNA]</scope>
    <source>
        <strain>1021</strain>
    </source>
</reference>
<proteinExistence type="inferred from homology"/>
<keyword id="KW-0067">ATP-binding</keyword>
<keyword id="KW-0963">Cytoplasm</keyword>
<keyword id="KW-0237">DNA synthesis</keyword>
<keyword id="KW-0418">Kinase</keyword>
<keyword id="KW-0479">Metal-binding</keyword>
<keyword id="KW-0547">Nucleotide-binding</keyword>
<keyword id="KW-1185">Reference proteome</keyword>
<keyword id="KW-0808">Transferase</keyword>
<keyword id="KW-0862">Zinc</keyword>
<dbReference type="EC" id="2.7.1.21" evidence="1"/>
<dbReference type="EMBL" id="AL591688">
    <property type="protein sequence ID" value="CAC46977.1"/>
    <property type="molecule type" value="Genomic_DNA"/>
</dbReference>
<dbReference type="RefSeq" id="NP_386504.1">
    <property type="nucleotide sequence ID" value="NC_003047.1"/>
</dbReference>
<dbReference type="RefSeq" id="WP_010969910.1">
    <property type="nucleotide sequence ID" value="NC_003047.1"/>
</dbReference>
<dbReference type="SMR" id="Q92N38"/>
<dbReference type="EnsemblBacteria" id="CAC46977">
    <property type="protein sequence ID" value="CAC46977"/>
    <property type="gene ID" value="SMc02736"/>
</dbReference>
<dbReference type="KEGG" id="sme:SMc02736"/>
<dbReference type="PATRIC" id="fig|266834.11.peg.3883"/>
<dbReference type="eggNOG" id="COG1435">
    <property type="taxonomic scope" value="Bacteria"/>
</dbReference>
<dbReference type="HOGENOM" id="CLU_064400_2_1_5"/>
<dbReference type="OrthoDB" id="9781579at2"/>
<dbReference type="Proteomes" id="UP000001976">
    <property type="component" value="Chromosome"/>
</dbReference>
<dbReference type="GO" id="GO:0005829">
    <property type="term" value="C:cytosol"/>
    <property type="evidence" value="ECO:0007669"/>
    <property type="project" value="TreeGrafter"/>
</dbReference>
<dbReference type="GO" id="GO:0005524">
    <property type="term" value="F:ATP binding"/>
    <property type="evidence" value="ECO:0007669"/>
    <property type="project" value="UniProtKB-UniRule"/>
</dbReference>
<dbReference type="GO" id="GO:0004797">
    <property type="term" value="F:thymidine kinase activity"/>
    <property type="evidence" value="ECO:0007669"/>
    <property type="project" value="UniProtKB-UniRule"/>
</dbReference>
<dbReference type="GO" id="GO:0008270">
    <property type="term" value="F:zinc ion binding"/>
    <property type="evidence" value="ECO:0007669"/>
    <property type="project" value="UniProtKB-UniRule"/>
</dbReference>
<dbReference type="GO" id="GO:0071897">
    <property type="term" value="P:DNA biosynthetic process"/>
    <property type="evidence" value="ECO:0007669"/>
    <property type="project" value="UniProtKB-KW"/>
</dbReference>
<dbReference type="GO" id="GO:0046104">
    <property type="term" value="P:thymidine metabolic process"/>
    <property type="evidence" value="ECO:0007669"/>
    <property type="project" value="TreeGrafter"/>
</dbReference>
<dbReference type="Gene3D" id="3.30.60.20">
    <property type="match status" value="1"/>
</dbReference>
<dbReference type="Gene3D" id="3.40.50.300">
    <property type="entry name" value="P-loop containing nucleotide triphosphate hydrolases"/>
    <property type="match status" value="1"/>
</dbReference>
<dbReference type="HAMAP" id="MF_00124">
    <property type="entry name" value="Thymidine_kinase"/>
    <property type="match status" value="1"/>
</dbReference>
<dbReference type="InterPro" id="IPR027417">
    <property type="entry name" value="P-loop_NTPase"/>
</dbReference>
<dbReference type="InterPro" id="IPR001267">
    <property type="entry name" value="Thymidine_kinase"/>
</dbReference>
<dbReference type="InterPro" id="IPR020633">
    <property type="entry name" value="Thymidine_kinase_CS"/>
</dbReference>
<dbReference type="NCBIfam" id="NF003300">
    <property type="entry name" value="PRK04296.1-5"/>
    <property type="match status" value="1"/>
</dbReference>
<dbReference type="PANTHER" id="PTHR11441">
    <property type="entry name" value="THYMIDINE KINASE"/>
    <property type="match status" value="1"/>
</dbReference>
<dbReference type="PANTHER" id="PTHR11441:SF0">
    <property type="entry name" value="THYMIDINE KINASE, CYTOSOLIC"/>
    <property type="match status" value="1"/>
</dbReference>
<dbReference type="Pfam" id="PF00265">
    <property type="entry name" value="TK"/>
    <property type="match status" value="1"/>
</dbReference>
<dbReference type="PIRSF" id="PIRSF035805">
    <property type="entry name" value="TK_cell"/>
    <property type="match status" value="1"/>
</dbReference>
<dbReference type="SUPFAM" id="SSF57716">
    <property type="entry name" value="Glucocorticoid receptor-like (DNA-binding domain)"/>
    <property type="match status" value="1"/>
</dbReference>
<dbReference type="SUPFAM" id="SSF52540">
    <property type="entry name" value="P-loop containing nucleoside triphosphate hydrolases"/>
    <property type="match status" value="1"/>
</dbReference>
<dbReference type="PROSITE" id="PS00603">
    <property type="entry name" value="TK_CELLULAR_TYPE"/>
    <property type="match status" value="1"/>
</dbReference>
<evidence type="ECO:0000255" key="1">
    <source>
        <dbReference type="HAMAP-Rule" id="MF_00124"/>
    </source>
</evidence>
<organism>
    <name type="scientific">Rhizobium meliloti (strain 1021)</name>
    <name type="common">Ensifer meliloti</name>
    <name type="synonym">Sinorhizobium meliloti</name>
    <dbReference type="NCBI Taxonomy" id="266834"/>
    <lineage>
        <taxon>Bacteria</taxon>
        <taxon>Pseudomonadati</taxon>
        <taxon>Pseudomonadota</taxon>
        <taxon>Alphaproteobacteria</taxon>
        <taxon>Hyphomicrobiales</taxon>
        <taxon>Rhizobiaceae</taxon>
        <taxon>Sinorhizobium/Ensifer group</taxon>
        <taxon>Sinorhizobium</taxon>
    </lineage>
</organism>
<protein>
    <recommendedName>
        <fullName evidence="1">Thymidine kinase</fullName>
        <ecNumber evidence="1">2.7.1.21</ecNumber>
    </recommendedName>
</protein>
<gene>
    <name evidence="1" type="primary">tdk</name>
    <name type="ordered locus">R02398</name>
    <name type="ORF">SMc02736</name>
</gene>
<name>KITH_RHIME</name>
<sequence length="195" mass="21788">MSKLYFSYATMNAGKSTLLLQAAYNYQERGMRVVMLIAAFDDRAGQGRIASRIGLESEAIPFRAEDDLHGLIERLNGDGSGEIACVFVDEAQFLGEDQVWQLARVADRLGIPVMAYGLRTDFQGKLFPGSMALLAIADELREVRTICHCGRKATMVVRLDGRGKVMREGAQVDVGGNEKYVSYCRRHWDDRMREG</sequence>
<comment type="catalytic activity">
    <reaction evidence="1">
        <text>thymidine + ATP = dTMP + ADP + H(+)</text>
        <dbReference type="Rhea" id="RHEA:19129"/>
        <dbReference type="ChEBI" id="CHEBI:15378"/>
        <dbReference type="ChEBI" id="CHEBI:17748"/>
        <dbReference type="ChEBI" id="CHEBI:30616"/>
        <dbReference type="ChEBI" id="CHEBI:63528"/>
        <dbReference type="ChEBI" id="CHEBI:456216"/>
        <dbReference type="EC" id="2.7.1.21"/>
    </reaction>
</comment>
<comment type="subunit">
    <text evidence="1">Homotetramer.</text>
</comment>
<comment type="subcellular location">
    <subcellularLocation>
        <location evidence="1">Cytoplasm</location>
    </subcellularLocation>
</comment>
<comment type="similarity">
    <text evidence="1">Belongs to the thymidine kinase family.</text>
</comment>